<dbReference type="EMBL" id="CP000644">
    <property type="protein sequence ID" value="ABO92004.1"/>
    <property type="molecule type" value="Genomic_DNA"/>
</dbReference>
<dbReference type="RefSeq" id="WP_005319700.1">
    <property type="nucleotide sequence ID" value="NC_009348.1"/>
</dbReference>
<dbReference type="SMR" id="A4SSY2"/>
<dbReference type="STRING" id="29491.GCA_000820065_03488"/>
<dbReference type="GeneID" id="79877790"/>
<dbReference type="KEGG" id="asa:ASA_4063"/>
<dbReference type="eggNOG" id="COG0522">
    <property type="taxonomic scope" value="Bacteria"/>
</dbReference>
<dbReference type="HOGENOM" id="CLU_092403_0_2_6"/>
<dbReference type="Proteomes" id="UP000000225">
    <property type="component" value="Chromosome"/>
</dbReference>
<dbReference type="GO" id="GO:0015935">
    <property type="term" value="C:small ribosomal subunit"/>
    <property type="evidence" value="ECO:0007669"/>
    <property type="project" value="InterPro"/>
</dbReference>
<dbReference type="GO" id="GO:0019843">
    <property type="term" value="F:rRNA binding"/>
    <property type="evidence" value="ECO:0007669"/>
    <property type="project" value="UniProtKB-UniRule"/>
</dbReference>
<dbReference type="GO" id="GO:0003735">
    <property type="term" value="F:structural constituent of ribosome"/>
    <property type="evidence" value="ECO:0007669"/>
    <property type="project" value="InterPro"/>
</dbReference>
<dbReference type="GO" id="GO:0042274">
    <property type="term" value="P:ribosomal small subunit biogenesis"/>
    <property type="evidence" value="ECO:0007669"/>
    <property type="project" value="TreeGrafter"/>
</dbReference>
<dbReference type="GO" id="GO:0006412">
    <property type="term" value="P:translation"/>
    <property type="evidence" value="ECO:0007669"/>
    <property type="project" value="UniProtKB-UniRule"/>
</dbReference>
<dbReference type="CDD" id="cd00165">
    <property type="entry name" value="S4"/>
    <property type="match status" value="1"/>
</dbReference>
<dbReference type="FunFam" id="1.10.1050.10:FF:000001">
    <property type="entry name" value="30S ribosomal protein S4"/>
    <property type="match status" value="1"/>
</dbReference>
<dbReference type="FunFam" id="3.10.290.10:FF:000001">
    <property type="entry name" value="30S ribosomal protein S4"/>
    <property type="match status" value="1"/>
</dbReference>
<dbReference type="Gene3D" id="1.10.1050.10">
    <property type="entry name" value="Ribosomal Protein S4 Delta 41, Chain A, domain 1"/>
    <property type="match status" value="1"/>
</dbReference>
<dbReference type="Gene3D" id="3.10.290.10">
    <property type="entry name" value="RNA-binding S4 domain"/>
    <property type="match status" value="1"/>
</dbReference>
<dbReference type="HAMAP" id="MF_01306_B">
    <property type="entry name" value="Ribosomal_uS4_B"/>
    <property type="match status" value="1"/>
</dbReference>
<dbReference type="InterPro" id="IPR022801">
    <property type="entry name" value="Ribosomal_uS4"/>
</dbReference>
<dbReference type="InterPro" id="IPR005709">
    <property type="entry name" value="Ribosomal_uS4_bac-type"/>
</dbReference>
<dbReference type="InterPro" id="IPR018079">
    <property type="entry name" value="Ribosomal_uS4_CS"/>
</dbReference>
<dbReference type="InterPro" id="IPR001912">
    <property type="entry name" value="Ribosomal_uS4_N"/>
</dbReference>
<dbReference type="InterPro" id="IPR002942">
    <property type="entry name" value="S4_RNA-bd"/>
</dbReference>
<dbReference type="InterPro" id="IPR036986">
    <property type="entry name" value="S4_RNA-bd_sf"/>
</dbReference>
<dbReference type="NCBIfam" id="NF003717">
    <property type="entry name" value="PRK05327.1"/>
    <property type="match status" value="1"/>
</dbReference>
<dbReference type="NCBIfam" id="TIGR01017">
    <property type="entry name" value="rpsD_bact"/>
    <property type="match status" value="1"/>
</dbReference>
<dbReference type="PANTHER" id="PTHR11831">
    <property type="entry name" value="30S 40S RIBOSOMAL PROTEIN"/>
    <property type="match status" value="1"/>
</dbReference>
<dbReference type="PANTHER" id="PTHR11831:SF4">
    <property type="entry name" value="SMALL RIBOSOMAL SUBUNIT PROTEIN US4M"/>
    <property type="match status" value="1"/>
</dbReference>
<dbReference type="Pfam" id="PF00163">
    <property type="entry name" value="Ribosomal_S4"/>
    <property type="match status" value="1"/>
</dbReference>
<dbReference type="Pfam" id="PF01479">
    <property type="entry name" value="S4"/>
    <property type="match status" value="1"/>
</dbReference>
<dbReference type="SMART" id="SM01390">
    <property type="entry name" value="Ribosomal_S4"/>
    <property type="match status" value="1"/>
</dbReference>
<dbReference type="SMART" id="SM00363">
    <property type="entry name" value="S4"/>
    <property type="match status" value="1"/>
</dbReference>
<dbReference type="SUPFAM" id="SSF55174">
    <property type="entry name" value="Alpha-L RNA-binding motif"/>
    <property type="match status" value="1"/>
</dbReference>
<dbReference type="PROSITE" id="PS00632">
    <property type="entry name" value="RIBOSOMAL_S4"/>
    <property type="match status" value="1"/>
</dbReference>
<dbReference type="PROSITE" id="PS50889">
    <property type="entry name" value="S4"/>
    <property type="match status" value="1"/>
</dbReference>
<gene>
    <name evidence="1" type="primary">rpsD</name>
    <name type="ordered locus">ASA_4063</name>
</gene>
<sequence>MARYIGPKLKLSRREGTDLFLKSGVRAIDSKCKIDTAPGQHGARKARLSDYGVQLREKQKVRRIYGVLEKQFRNYYRDAARQKGNTGENLLQLLEGRLDNVVYRMGFGATRAESRQLVSHKAIMVNGRVVNIPSFQVSPEDVVCVREKAKKQARIKASLEVAGQREKPTWVEVDTAKMEGAFKRLPERSDLSADINEQLIVELYSK</sequence>
<proteinExistence type="inferred from homology"/>
<organism>
    <name type="scientific">Aeromonas salmonicida (strain A449)</name>
    <dbReference type="NCBI Taxonomy" id="382245"/>
    <lineage>
        <taxon>Bacteria</taxon>
        <taxon>Pseudomonadati</taxon>
        <taxon>Pseudomonadota</taxon>
        <taxon>Gammaproteobacteria</taxon>
        <taxon>Aeromonadales</taxon>
        <taxon>Aeromonadaceae</taxon>
        <taxon>Aeromonas</taxon>
    </lineage>
</organism>
<comment type="function">
    <text evidence="1">One of the primary rRNA binding proteins, it binds directly to 16S rRNA where it nucleates assembly of the body of the 30S subunit.</text>
</comment>
<comment type="function">
    <text evidence="1">With S5 and S12 plays an important role in translational accuracy.</text>
</comment>
<comment type="subunit">
    <text evidence="1">Part of the 30S ribosomal subunit. Contacts protein S5. The interaction surface between S4 and S5 is involved in control of translational fidelity.</text>
</comment>
<comment type="similarity">
    <text evidence="1">Belongs to the universal ribosomal protein uS4 family.</text>
</comment>
<feature type="chain" id="PRO_0000293231" description="Small ribosomal subunit protein uS4">
    <location>
        <begin position="1"/>
        <end position="206"/>
    </location>
</feature>
<feature type="domain" description="S4 RNA-binding" evidence="1">
    <location>
        <begin position="96"/>
        <end position="156"/>
    </location>
</feature>
<protein>
    <recommendedName>
        <fullName evidence="1">Small ribosomal subunit protein uS4</fullName>
    </recommendedName>
    <alternativeName>
        <fullName evidence="2">30S ribosomal protein S4</fullName>
    </alternativeName>
</protein>
<name>RS4_AERS4</name>
<reference key="1">
    <citation type="journal article" date="2008" name="BMC Genomics">
        <title>The genome of Aeromonas salmonicida subsp. salmonicida A449: insights into the evolution of a fish pathogen.</title>
        <authorList>
            <person name="Reith M.E."/>
            <person name="Singh R.K."/>
            <person name="Curtis B."/>
            <person name="Boyd J.M."/>
            <person name="Bouevitch A."/>
            <person name="Kimball J."/>
            <person name="Munholland J."/>
            <person name="Murphy C."/>
            <person name="Sarty D."/>
            <person name="Williams J."/>
            <person name="Nash J.H."/>
            <person name="Johnson S.C."/>
            <person name="Brown L.L."/>
        </authorList>
    </citation>
    <scope>NUCLEOTIDE SEQUENCE [LARGE SCALE GENOMIC DNA]</scope>
    <source>
        <strain>A449</strain>
    </source>
</reference>
<accession>A4SSY2</accession>
<keyword id="KW-0687">Ribonucleoprotein</keyword>
<keyword id="KW-0689">Ribosomal protein</keyword>
<keyword id="KW-0694">RNA-binding</keyword>
<keyword id="KW-0699">rRNA-binding</keyword>
<evidence type="ECO:0000255" key="1">
    <source>
        <dbReference type="HAMAP-Rule" id="MF_01306"/>
    </source>
</evidence>
<evidence type="ECO:0000305" key="2"/>